<protein>
    <recommendedName>
        <fullName>Isocitrate dehydrogenase [NAD] subunit 2, mitochondrial</fullName>
        <ecNumber>1.1.1.41</ecNumber>
    </recommendedName>
    <alternativeName>
        <fullName>Isocitric dehydrogenase</fullName>
    </alternativeName>
    <alternativeName>
        <fullName>NAD(+)-specific ICDH</fullName>
    </alternativeName>
</protein>
<reference key="1">
    <citation type="journal article" date="1991" name="J. Biol. Chem.">
        <title>NAD(+)-dependent isocitrate dehydrogenase. Cloning, nucleotide sequence, and disruption of the IDH2 gene from Saccharomyces cerevisiae.</title>
        <authorList>
            <person name="Cupp J.R."/>
            <person name="McAlister-Henn L."/>
        </authorList>
    </citation>
    <scope>NUCLEOTIDE SEQUENCE [GENOMIC DNA]</scope>
</reference>
<reference key="2">
    <citation type="journal article" date="1996" name="Yeast">
        <title>Sequencing and analysis of 51 kb on the right arm of chromosome XV from Saccharomyces cerevisiae reveals 30 open reading frames.</title>
        <authorList>
            <person name="Wiemann S."/>
            <person name="Rechmann S."/>
            <person name="Benes V."/>
            <person name="Voss H."/>
            <person name="Schwager C."/>
            <person name="Vlcek C."/>
            <person name="Stegemann J."/>
            <person name="Zimmermann J."/>
            <person name="Erfle H."/>
            <person name="Paces V."/>
            <person name="Ansorge W."/>
        </authorList>
    </citation>
    <scope>NUCLEOTIDE SEQUENCE [GENOMIC DNA]</scope>
    <source>
        <strain>ATCC 96604 / S288c / FY1679</strain>
    </source>
</reference>
<reference key="3">
    <citation type="journal article" date="1997" name="Yeast">
        <title>DNA sequencing and analysis of 130 kb from yeast chromosome XV.</title>
        <authorList>
            <person name="Voss H."/>
            <person name="Benes V."/>
            <person name="Andrade M.A."/>
            <person name="Valencia A."/>
            <person name="Rechmann S."/>
            <person name="Teodoru C."/>
            <person name="Schwager C."/>
            <person name="Paces V."/>
            <person name="Sander C."/>
            <person name="Ansorge W."/>
        </authorList>
    </citation>
    <scope>NUCLEOTIDE SEQUENCE [GENOMIC DNA]</scope>
</reference>
<reference key="4">
    <citation type="journal article" date="1997" name="Nature">
        <title>The nucleotide sequence of Saccharomyces cerevisiae chromosome XV.</title>
        <authorList>
            <person name="Dujon B."/>
            <person name="Albermann K."/>
            <person name="Aldea M."/>
            <person name="Alexandraki D."/>
            <person name="Ansorge W."/>
            <person name="Arino J."/>
            <person name="Benes V."/>
            <person name="Bohn C."/>
            <person name="Bolotin-Fukuhara M."/>
            <person name="Bordonne R."/>
            <person name="Boyer J."/>
            <person name="Camasses A."/>
            <person name="Casamayor A."/>
            <person name="Casas C."/>
            <person name="Cheret G."/>
            <person name="Cziepluch C."/>
            <person name="Daignan-Fornier B."/>
            <person name="Dang V.-D."/>
            <person name="de Haan M."/>
            <person name="Delius H."/>
            <person name="Durand P."/>
            <person name="Fairhead C."/>
            <person name="Feldmann H."/>
            <person name="Gaillon L."/>
            <person name="Galisson F."/>
            <person name="Gamo F.-J."/>
            <person name="Gancedo C."/>
            <person name="Goffeau A."/>
            <person name="Goulding S.E."/>
            <person name="Grivell L.A."/>
            <person name="Habbig B."/>
            <person name="Hand N.J."/>
            <person name="Hani J."/>
            <person name="Hattenhorst U."/>
            <person name="Hebling U."/>
            <person name="Hernando Y."/>
            <person name="Herrero E."/>
            <person name="Heumann K."/>
            <person name="Hiesel R."/>
            <person name="Hilger F."/>
            <person name="Hofmann B."/>
            <person name="Hollenberg C.P."/>
            <person name="Hughes B."/>
            <person name="Jauniaux J.-C."/>
            <person name="Kalogeropoulos A."/>
            <person name="Katsoulou C."/>
            <person name="Kordes E."/>
            <person name="Lafuente M.J."/>
            <person name="Landt O."/>
            <person name="Louis E.J."/>
            <person name="Maarse A.C."/>
            <person name="Madania A."/>
            <person name="Mannhaupt G."/>
            <person name="Marck C."/>
            <person name="Martin R.P."/>
            <person name="Mewes H.-W."/>
            <person name="Michaux G."/>
            <person name="Paces V."/>
            <person name="Parle-McDermott A.G."/>
            <person name="Pearson B.M."/>
            <person name="Perrin A."/>
            <person name="Pettersson B."/>
            <person name="Poch O."/>
            <person name="Pohl T.M."/>
            <person name="Poirey R."/>
            <person name="Portetelle D."/>
            <person name="Pujol A."/>
            <person name="Purnelle B."/>
            <person name="Ramezani Rad M."/>
            <person name="Rechmann S."/>
            <person name="Schwager C."/>
            <person name="Schweizer M."/>
            <person name="Sor F."/>
            <person name="Sterky F."/>
            <person name="Tarassov I.A."/>
            <person name="Teodoru C."/>
            <person name="Tettelin H."/>
            <person name="Thierry A."/>
            <person name="Tobiasch E."/>
            <person name="Tzermia M."/>
            <person name="Uhlen M."/>
            <person name="Unseld M."/>
            <person name="Valens M."/>
            <person name="Vandenbol M."/>
            <person name="Vetter I."/>
            <person name="Vlcek C."/>
            <person name="Voet M."/>
            <person name="Volckaert G."/>
            <person name="Voss H."/>
            <person name="Wambutt R."/>
            <person name="Wedler H."/>
            <person name="Wiemann S."/>
            <person name="Winsor B."/>
            <person name="Wolfe K.H."/>
            <person name="Zollner A."/>
            <person name="Zumstein E."/>
            <person name="Kleine K."/>
        </authorList>
    </citation>
    <scope>NUCLEOTIDE SEQUENCE [LARGE SCALE GENOMIC DNA]</scope>
    <source>
        <strain>ATCC 204508 / S288c</strain>
    </source>
</reference>
<reference key="5">
    <citation type="journal article" date="2014" name="G3 (Bethesda)">
        <title>The reference genome sequence of Saccharomyces cerevisiae: Then and now.</title>
        <authorList>
            <person name="Engel S.R."/>
            <person name="Dietrich F.S."/>
            <person name="Fisk D.G."/>
            <person name="Binkley G."/>
            <person name="Balakrishnan R."/>
            <person name="Costanzo M.C."/>
            <person name="Dwight S.S."/>
            <person name="Hitz B.C."/>
            <person name="Karra K."/>
            <person name="Nash R.S."/>
            <person name="Weng S."/>
            <person name="Wong E.D."/>
            <person name="Lloyd P."/>
            <person name="Skrzypek M.S."/>
            <person name="Miyasato S.R."/>
            <person name="Simison M."/>
            <person name="Cherry J.M."/>
        </authorList>
    </citation>
    <scope>GENOME REANNOTATION</scope>
    <source>
        <strain>ATCC 204508 / S288c</strain>
    </source>
</reference>
<reference key="6">
    <citation type="journal article" date="1990" name="J. Bacteriol.">
        <title>Subunit structure, expression, and function of NAD(H)-specific isocitrate dehydrogenase in Saccharomyces cerevisiae.</title>
        <authorList>
            <person name="Keys D.A."/>
            <person name="McAlister-Henn L."/>
        </authorList>
    </citation>
    <scope>PROTEIN SEQUENCE OF 16-26</scope>
    <source>
        <strain>SG7</strain>
    </source>
</reference>
<reference key="7">
    <citation type="journal article" date="1993" name="Nucleic Acids Res.">
        <title>Yeast mitochondrial NAD(+)-dependent isocitrate dehydrogenase is an RNA-binding protein.</title>
        <authorList>
            <person name="Elzinga S.D.J."/>
            <person name="Bednarz A.L."/>
            <person name="van Oosterum K."/>
            <person name="Dekker P.J.T."/>
            <person name="Grivell L.A."/>
        </authorList>
    </citation>
    <scope>RNA-BINDING</scope>
    <scope>PROTEIN SEQUENCE OF 16-34</scope>
</reference>
<reference key="8">
    <citation type="journal article" date="2001" name="Biochemistry">
        <title>Yeast mitochondrial dehydrogenases are associated in a supramolecular complex.</title>
        <authorList>
            <person name="Grandier-Vazeille X."/>
            <person name="Bathany K."/>
            <person name="Chaignepain S."/>
            <person name="Camougrand N."/>
            <person name="Manon S."/>
            <person name="Schmitter J.-M."/>
        </authorList>
    </citation>
    <scope>SUBCELLULAR LOCATION</scope>
</reference>
<reference key="9">
    <citation type="journal article" date="2003" name="Nature">
        <title>Global analysis of protein expression in yeast.</title>
        <authorList>
            <person name="Ghaemmaghami S."/>
            <person name="Huh W.-K."/>
            <person name="Bower K."/>
            <person name="Howson R.W."/>
            <person name="Belle A."/>
            <person name="Dephoure N."/>
            <person name="O'Shea E.K."/>
            <person name="Weissman J.S."/>
        </authorList>
    </citation>
    <scope>LEVEL OF PROTEIN EXPRESSION [LARGE SCALE ANALYSIS]</scope>
</reference>
<reference key="10">
    <citation type="journal article" date="2007" name="Mol. Cell. Proteomics">
        <title>Profiling phosphoproteins of yeast mitochondria reveals a role of phosphorylation in assembly of the ATP synthase.</title>
        <authorList>
            <person name="Reinders J."/>
            <person name="Wagner K."/>
            <person name="Zahedi R.P."/>
            <person name="Stojanovski D."/>
            <person name="Eyrich B."/>
            <person name="van der Laan M."/>
            <person name="Rehling P."/>
            <person name="Sickmann A."/>
            <person name="Pfanner N."/>
            <person name="Meisinger C."/>
        </authorList>
    </citation>
    <scope>PHOSPHORYLATION [LARGE SCALE ANALYSIS] AT THR-349</scope>
    <scope>IDENTIFICATION BY MASS SPECTROMETRY [LARGE SCALE ANALYSIS]</scope>
    <source>
        <strain>ATCC 76625 / YPH499</strain>
    </source>
</reference>
<reference key="11">
    <citation type="journal article" date="2008" name="Mol. Cell. Proteomics">
        <title>A multidimensional chromatography technology for in-depth phosphoproteome analysis.</title>
        <authorList>
            <person name="Albuquerque C.P."/>
            <person name="Smolka M.B."/>
            <person name="Payne S.H."/>
            <person name="Bafna V."/>
            <person name="Eng J."/>
            <person name="Zhou H."/>
        </authorList>
    </citation>
    <scope>PHOSPHORYLATION [LARGE SCALE ANALYSIS] AT THR-105 AND THR-153</scope>
    <scope>IDENTIFICATION BY MASS SPECTROMETRY [LARGE SCALE ANALYSIS]</scope>
</reference>
<reference key="12">
    <citation type="journal article" date="2009" name="Science">
        <title>Global analysis of Cdk1 substrate phosphorylation sites provides insights into evolution.</title>
        <authorList>
            <person name="Holt L.J."/>
            <person name="Tuch B.B."/>
            <person name="Villen J."/>
            <person name="Johnson A.D."/>
            <person name="Gygi S.P."/>
            <person name="Morgan D.O."/>
        </authorList>
    </citation>
    <scope>PHOSPHORYLATION [LARGE SCALE ANALYSIS] AT THR-153 AND THR-327</scope>
    <scope>IDENTIFICATION BY MASS SPECTROMETRY [LARGE SCALE ANALYSIS]</scope>
</reference>
<sequence>MLRNTFFRNTSRRFLATVKQPSIGRYTGKPNPSTGKYTVSFIEGDGIGPEISKSVKKIFSAANVPIEWESCDVSPIFVNGLTTIPDPAVQSITKNLVALKGPLATPIGKGHRSLNLTLRKTFGLFANVRPAKSIEGFKTTYENVDLVLIRENTEGEYSGIEHIVCPGVVQSIKLITRDASERVIRYAFEYARAIGRPRVIVVHKSTIQRLADGLFVNVAKELSKEYPDLTLETELIDNSVLKVVTNPSAYTDAVSVCPNLYGDILSDLNSGLSAGSLGLTPSANIGHKISIFEAVHGSAPDIAGQDKANPTALLLSSVMMLNHMGLTNHADQIQNAVLSTIASGPENRTGDLAGTATTSSFTEAVIKRL</sequence>
<comment type="function">
    <text>Performs an essential role in the oxidative function of the citric acid cycle. Also binds RNA; specifically to the 5'-untranslated leaders of mitochondrial mRNAs.</text>
</comment>
<comment type="catalytic activity">
    <reaction>
        <text>D-threo-isocitrate + NAD(+) = 2-oxoglutarate + CO2 + NADH</text>
        <dbReference type="Rhea" id="RHEA:23632"/>
        <dbReference type="ChEBI" id="CHEBI:15562"/>
        <dbReference type="ChEBI" id="CHEBI:16526"/>
        <dbReference type="ChEBI" id="CHEBI:16810"/>
        <dbReference type="ChEBI" id="CHEBI:57540"/>
        <dbReference type="ChEBI" id="CHEBI:57945"/>
        <dbReference type="EC" id="1.1.1.41"/>
    </reaction>
</comment>
<comment type="cofactor">
    <cofactor evidence="1">
        <name>Mg(2+)</name>
        <dbReference type="ChEBI" id="CHEBI:18420"/>
    </cofactor>
    <cofactor evidence="1">
        <name>Mn(2+)</name>
        <dbReference type="ChEBI" id="CHEBI:29035"/>
    </cofactor>
    <text evidence="1">Binds 1 Mg(2+) or Mn(2+) ion per subunit.</text>
</comment>
<comment type="activity regulation">
    <text>Allosterically regulated by several compounds including AMP, NAD(+), and citrate.</text>
</comment>
<comment type="subunit">
    <text>Octamer of two non-identical subunits IDH1 and IDH2.</text>
</comment>
<comment type="interaction">
    <interactant intactId="EBI-8883">
        <id>P28241</id>
    </interactant>
    <interactant intactId="EBI-8878">
        <id>P28834</id>
        <label>IDH1</label>
    </interactant>
    <organismsDiffer>false</organismsDiffer>
    <experiments>7</experiments>
</comment>
<comment type="subcellular location">
    <subcellularLocation>
        <location evidence="3">Mitochondrion matrix</location>
    </subcellularLocation>
</comment>
<comment type="miscellaneous">
    <text evidence="4">Present with 43100 molecules/cell in log phase SD medium.</text>
</comment>
<comment type="similarity">
    <text evidence="7">Belongs to the isocitrate and isopropylmalate dehydrogenases family.</text>
</comment>
<dbReference type="EC" id="1.1.1.41"/>
<dbReference type="EMBL" id="M74131">
    <property type="protein sequence ID" value="AAA34702.1"/>
    <property type="molecule type" value="Genomic_DNA"/>
</dbReference>
<dbReference type="EMBL" id="X94335">
    <property type="protein sequence ID" value="CAA64054.1"/>
    <property type="molecule type" value="Genomic_DNA"/>
</dbReference>
<dbReference type="EMBL" id="Z75043">
    <property type="protein sequence ID" value="CAA99335.1"/>
    <property type="molecule type" value="Genomic_DNA"/>
</dbReference>
<dbReference type="EMBL" id="X90518">
    <property type="protein sequence ID" value="CAA62110.1"/>
    <property type="molecule type" value="Genomic_DNA"/>
</dbReference>
<dbReference type="EMBL" id="BK006948">
    <property type="protein sequence ID" value="DAA10909.1"/>
    <property type="molecule type" value="Genomic_DNA"/>
</dbReference>
<dbReference type="PIR" id="A39309">
    <property type="entry name" value="A39309"/>
</dbReference>
<dbReference type="RefSeq" id="NP_014779.1">
    <property type="nucleotide sequence ID" value="NM_001183555.1"/>
</dbReference>
<dbReference type="PDB" id="3BLV">
    <property type="method" value="X-ray"/>
    <property type="resolution" value="3.20 A"/>
    <property type="chains" value="B/D/F/H=16-369"/>
</dbReference>
<dbReference type="PDB" id="3BLW">
    <property type="method" value="X-ray"/>
    <property type="resolution" value="4.30 A"/>
    <property type="chains" value="B/D/F/H/J/L/N/P=16-369"/>
</dbReference>
<dbReference type="PDB" id="3BLX">
    <property type="method" value="X-ray"/>
    <property type="resolution" value="2.70 A"/>
    <property type="chains" value="B/D/F/H/J/L/N/P=16-369"/>
</dbReference>
<dbReference type="PDBsum" id="3BLV"/>
<dbReference type="PDBsum" id="3BLW"/>
<dbReference type="PDBsum" id="3BLX"/>
<dbReference type="SMR" id="P28241"/>
<dbReference type="BioGRID" id="34531">
    <property type="interactions" value="387"/>
</dbReference>
<dbReference type="ComplexPortal" id="CPX-558">
    <property type="entry name" value="Mitochondrial isocitrate dehydrogenase complex (NAD+)"/>
</dbReference>
<dbReference type="DIP" id="DIP-4296N"/>
<dbReference type="FunCoup" id="P28241">
    <property type="interactions" value="1134"/>
</dbReference>
<dbReference type="IntAct" id="P28241">
    <property type="interactions" value="81"/>
</dbReference>
<dbReference type="MINT" id="P28241"/>
<dbReference type="STRING" id="4932.YOR136W"/>
<dbReference type="MoonProt" id="P28241"/>
<dbReference type="GlyGen" id="P28241">
    <property type="glycosylation" value="2 sites, 1 O-linked glycan (2 sites)"/>
</dbReference>
<dbReference type="iPTMnet" id="P28241"/>
<dbReference type="PaxDb" id="4932-YOR136W"/>
<dbReference type="PeptideAtlas" id="P28241"/>
<dbReference type="EnsemblFungi" id="YOR136W_mRNA">
    <property type="protein sequence ID" value="YOR136W"/>
    <property type="gene ID" value="YOR136W"/>
</dbReference>
<dbReference type="GeneID" id="854303"/>
<dbReference type="KEGG" id="sce:YOR136W"/>
<dbReference type="AGR" id="SGD:S000005662"/>
<dbReference type="SGD" id="S000005662">
    <property type="gene designation" value="IDH2"/>
</dbReference>
<dbReference type="VEuPathDB" id="FungiDB:YOR136W"/>
<dbReference type="eggNOG" id="KOG0785">
    <property type="taxonomic scope" value="Eukaryota"/>
</dbReference>
<dbReference type="GeneTree" id="ENSGT00950000182989"/>
<dbReference type="HOGENOM" id="CLU_031953_0_1_1"/>
<dbReference type="InParanoid" id="P28241"/>
<dbReference type="OMA" id="VRPCRYY"/>
<dbReference type="OrthoDB" id="10261637at2759"/>
<dbReference type="BioCyc" id="MetaCyc:YOR136W-MONOMER"/>
<dbReference type="BioCyc" id="YEAST:YOR136W-MONOMER"/>
<dbReference type="BRENDA" id="1.1.1.41">
    <property type="organism ID" value="984"/>
</dbReference>
<dbReference type="Reactome" id="R-SCE-71403">
    <property type="pathway name" value="Citric acid cycle (TCA cycle)"/>
</dbReference>
<dbReference type="BioGRID-ORCS" id="854303">
    <property type="hits" value="0 hits in 10 CRISPR screens"/>
</dbReference>
<dbReference type="EvolutionaryTrace" id="P28241"/>
<dbReference type="PRO" id="PR:P28241"/>
<dbReference type="Proteomes" id="UP000002311">
    <property type="component" value="Chromosome XV"/>
</dbReference>
<dbReference type="RNAct" id="P28241">
    <property type="molecule type" value="protein"/>
</dbReference>
<dbReference type="GO" id="GO:0045242">
    <property type="term" value="C:isocitrate dehydrogenase complex (NAD+)"/>
    <property type="evidence" value="ECO:0000314"/>
    <property type="project" value="SGD"/>
</dbReference>
<dbReference type="GO" id="GO:0005759">
    <property type="term" value="C:mitochondrial matrix"/>
    <property type="evidence" value="ECO:0007669"/>
    <property type="project" value="UniProtKB-SubCell"/>
</dbReference>
<dbReference type="GO" id="GO:0005739">
    <property type="term" value="C:mitochondrion"/>
    <property type="evidence" value="ECO:0000314"/>
    <property type="project" value="SGD"/>
</dbReference>
<dbReference type="GO" id="GO:0004449">
    <property type="term" value="F:isocitrate dehydrogenase (NAD+) activity"/>
    <property type="evidence" value="ECO:0007669"/>
    <property type="project" value="UniProtKB-EC"/>
</dbReference>
<dbReference type="GO" id="GO:0000287">
    <property type="term" value="F:magnesium ion binding"/>
    <property type="evidence" value="ECO:0007669"/>
    <property type="project" value="InterPro"/>
</dbReference>
<dbReference type="GO" id="GO:0051287">
    <property type="term" value="F:NAD binding"/>
    <property type="evidence" value="ECO:0007669"/>
    <property type="project" value="InterPro"/>
</dbReference>
<dbReference type="GO" id="GO:0003723">
    <property type="term" value="F:RNA binding"/>
    <property type="evidence" value="ECO:0007669"/>
    <property type="project" value="UniProtKB-KW"/>
</dbReference>
<dbReference type="GO" id="GO:0006537">
    <property type="term" value="P:glutamate biosynthetic process"/>
    <property type="evidence" value="ECO:0000304"/>
    <property type="project" value="SGD"/>
</dbReference>
<dbReference type="GO" id="GO:0006102">
    <property type="term" value="P:isocitrate metabolic process"/>
    <property type="evidence" value="ECO:0000314"/>
    <property type="project" value="SGD"/>
</dbReference>
<dbReference type="GO" id="GO:0006099">
    <property type="term" value="P:tricarboxylic acid cycle"/>
    <property type="evidence" value="ECO:0000314"/>
    <property type="project" value="ComplexPortal"/>
</dbReference>
<dbReference type="FunFam" id="3.40.718.10:FF:000003">
    <property type="entry name" value="Isocitrate dehydrogenase [NAD] subunit, mitochondrial"/>
    <property type="match status" value="1"/>
</dbReference>
<dbReference type="Gene3D" id="3.40.718.10">
    <property type="entry name" value="Isopropylmalate Dehydrogenase"/>
    <property type="match status" value="1"/>
</dbReference>
<dbReference type="InterPro" id="IPR019818">
    <property type="entry name" value="IsoCit/isopropylmalate_DH_CS"/>
</dbReference>
<dbReference type="InterPro" id="IPR004434">
    <property type="entry name" value="Isocitrate_DH_NAD"/>
</dbReference>
<dbReference type="InterPro" id="IPR024084">
    <property type="entry name" value="IsoPropMal-DH-like_dom"/>
</dbReference>
<dbReference type="NCBIfam" id="TIGR00175">
    <property type="entry name" value="mito_nad_idh"/>
    <property type="match status" value="1"/>
</dbReference>
<dbReference type="PANTHER" id="PTHR11835">
    <property type="entry name" value="DECARBOXYLATING DEHYDROGENASES-ISOCITRATE, ISOPROPYLMALATE, TARTRATE"/>
    <property type="match status" value="1"/>
</dbReference>
<dbReference type="PANTHER" id="PTHR11835:SF34">
    <property type="entry name" value="ISOCITRATE DEHYDROGENASE [NAD] SUBUNIT ALPHA, MITOCHONDRIAL"/>
    <property type="match status" value="1"/>
</dbReference>
<dbReference type="Pfam" id="PF00180">
    <property type="entry name" value="Iso_dh"/>
    <property type="match status" value="1"/>
</dbReference>
<dbReference type="SMART" id="SM01329">
    <property type="entry name" value="Iso_dh"/>
    <property type="match status" value="1"/>
</dbReference>
<dbReference type="SUPFAM" id="SSF53659">
    <property type="entry name" value="Isocitrate/Isopropylmalate dehydrogenase-like"/>
    <property type="match status" value="1"/>
</dbReference>
<dbReference type="PROSITE" id="PS00470">
    <property type="entry name" value="IDH_IMDH"/>
    <property type="match status" value="1"/>
</dbReference>
<organism>
    <name type="scientific">Saccharomyces cerevisiae (strain ATCC 204508 / S288c)</name>
    <name type="common">Baker's yeast</name>
    <dbReference type="NCBI Taxonomy" id="559292"/>
    <lineage>
        <taxon>Eukaryota</taxon>
        <taxon>Fungi</taxon>
        <taxon>Dikarya</taxon>
        <taxon>Ascomycota</taxon>
        <taxon>Saccharomycotina</taxon>
        <taxon>Saccharomycetes</taxon>
        <taxon>Saccharomycetales</taxon>
        <taxon>Saccharomycetaceae</taxon>
        <taxon>Saccharomyces</taxon>
    </lineage>
</organism>
<proteinExistence type="evidence at protein level"/>
<feature type="transit peptide" description="Mitochondrion" evidence="5 6">
    <location>
        <begin position="1"/>
        <end position="15"/>
    </location>
</feature>
<feature type="chain" id="PRO_0000014434" description="Isocitrate dehydrogenase [NAD] subunit 2, mitochondrial">
    <location>
        <begin position="16"/>
        <end position="369"/>
    </location>
</feature>
<feature type="binding site" evidence="1">
    <location>
        <position position="119"/>
    </location>
    <ligand>
        <name>substrate</name>
    </ligand>
</feature>
<feature type="binding site" evidence="1">
    <location>
        <position position="129"/>
    </location>
    <ligand>
        <name>substrate</name>
    </ligand>
</feature>
<feature type="binding site" evidence="1">
    <location>
        <position position="150"/>
    </location>
    <ligand>
        <name>substrate</name>
    </ligand>
</feature>
<feature type="binding site" evidence="2">
    <location>
        <position position="237"/>
    </location>
    <ligand>
        <name>Mg(2+)</name>
        <dbReference type="ChEBI" id="CHEBI:18420"/>
    </ligand>
</feature>
<feature type="binding site" evidence="1">
    <location>
        <position position="237"/>
    </location>
    <ligand>
        <name>substrate</name>
    </ligand>
</feature>
<feature type="binding site" evidence="2">
    <location>
        <position position="263"/>
    </location>
    <ligand>
        <name>Mg(2+)</name>
        <dbReference type="ChEBI" id="CHEBI:18420"/>
    </ligand>
</feature>
<feature type="binding site" evidence="2">
    <location>
        <position position="267"/>
    </location>
    <ligand>
        <name>Mg(2+)</name>
        <dbReference type="ChEBI" id="CHEBI:18420"/>
    </ligand>
</feature>
<feature type="site" description="Critical for catalysis" evidence="1">
    <location>
        <position position="157"/>
    </location>
</feature>
<feature type="site" description="Critical for catalysis" evidence="1">
    <location>
        <position position="204"/>
    </location>
</feature>
<feature type="modified residue" description="Phosphothreonine" evidence="9">
    <location>
        <position position="105"/>
    </location>
</feature>
<feature type="modified residue" description="Phosphothreonine" evidence="9 10">
    <location>
        <position position="153"/>
    </location>
</feature>
<feature type="modified residue" description="Phosphothreonine" evidence="10">
    <location>
        <position position="327"/>
    </location>
</feature>
<feature type="modified residue" description="Phosphothreonine" evidence="8">
    <location>
        <position position="349"/>
    </location>
</feature>
<feature type="sequence conflict" description="In Ref. 6; AA sequence." evidence="7" ref="6">
    <original>R</original>
    <variation>G</variation>
    <location>
        <position position="25"/>
    </location>
</feature>
<feature type="helix" evidence="11">
    <location>
        <begin position="22"/>
        <end position="24"/>
    </location>
</feature>
<feature type="turn" evidence="12">
    <location>
        <begin position="32"/>
        <end position="34"/>
    </location>
</feature>
<feature type="helix" evidence="12">
    <location>
        <begin position="48"/>
        <end position="60"/>
    </location>
</feature>
<feature type="turn" evidence="12">
    <location>
        <begin position="61"/>
        <end position="63"/>
    </location>
</feature>
<feature type="strand" evidence="12">
    <location>
        <begin position="65"/>
        <end position="67"/>
    </location>
</feature>
<feature type="strand" evidence="12">
    <location>
        <begin position="76"/>
        <end position="78"/>
    </location>
</feature>
<feature type="strand" evidence="12">
    <location>
        <begin position="81"/>
        <end position="83"/>
    </location>
</feature>
<feature type="helix" evidence="12">
    <location>
        <begin position="86"/>
        <end position="95"/>
    </location>
</feature>
<feature type="strand" evidence="12">
    <location>
        <begin position="96"/>
        <end position="100"/>
    </location>
</feature>
<feature type="helix" evidence="12">
    <location>
        <begin position="114"/>
        <end position="122"/>
    </location>
</feature>
<feature type="strand" evidence="12">
    <location>
        <begin position="124"/>
        <end position="132"/>
    </location>
</feature>
<feature type="strand" evidence="12">
    <location>
        <begin position="145"/>
        <end position="151"/>
    </location>
</feature>
<feature type="strand" evidence="12">
    <location>
        <begin position="153"/>
        <end position="163"/>
    </location>
</feature>
<feature type="strand" evidence="12">
    <location>
        <begin position="168"/>
        <end position="176"/>
    </location>
</feature>
<feature type="helix" evidence="12">
    <location>
        <begin position="177"/>
        <end position="193"/>
    </location>
</feature>
<feature type="strand" evidence="12">
    <location>
        <begin position="197"/>
        <end position="204"/>
    </location>
</feature>
<feature type="turn" evidence="12">
    <location>
        <begin position="206"/>
        <end position="208"/>
    </location>
</feature>
<feature type="helix" evidence="12">
    <location>
        <begin position="210"/>
        <end position="223"/>
    </location>
</feature>
<feature type="strand" evidence="12">
    <location>
        <begin position="229"/>
        <end position="235"/>
    </location>
</feature>
<feature type="helix" evidence="12">
    <location>
        <begin position="236"/>
        <end position="245"/>
    </location>
</feature>
<feature type="helix" evidence="12">
    <location>
        <begin position="247"/>
        <end position="250"/>
    </location>
</feature>
<feature type="strand" evidence="12">
    <location>
        <begin position="253"/>
        <end position="257"/>
    </location>
</feature>
<feature type="helix" evidence="12">
    <location>
        <begin position="259"/>
        <end position="273"/>
    </location>
</feature>
<feature type="helix" evidence="12">
    <location>
        <begin position="277"/>
        <end position="279"/>
    </location>
</feature>
<feature type="strand" evidence="12">
    <location>
        <begin position="281"/>
        <end position="288"/>
    </location>
</feature>
<feature type="strand" evidence="12">
    <location>
        <begin position="290"/>
        <end position="294"/>
    </location>
</feature>
<feature type="helix" evidence="12">
    <location>
        <begin position="300"/>
        <end position="302"/>
    </location>
</feature>
<feature type="turn" evidence="12">
    <location>
        <begin position="303"/>
        <end position="306"/>
    </location>
</feature>
<feature type="helix" evidence="12">
    <location>
        <begin position="311"/>
        <end position="324"/>
    </location>
</feature>
<feature type="helix" evidence="12">
    <location>
        <begin position="327"/>
        <end position="335"/>
    </location>
</feature>
<feature type="helix" evidence="12">
    <location>
        <begin position="337"/>
        <end position="341"/>
    </location>
</feature>
<feature type="helix" evidence="12">
    <location>
        <begin position="350"/>
        <end position="352"/>
    </location>
</feature>
<feature type="helix" evidence="12">
    <location>
        <begin position="358"/>
        <end position="367"/>
    </location>
</feature>
<name>IDH2_YEAST</name>
<keyword id="KW-0002">3D-structure</keyword>
<keyword id="KW-0021">Allosteric enzyme</keyword>
<keyword id="KW-0903">Direct protein sequencing</keyword>
<keyword id="KW-0460">Magnesium</keyword>
<keyword id="KW-0464">Manganese</keyword>
<keyword id="KW-0479">Metal-binding</keyword>
<keyword id="KW-0496">Mitochondrion</keyword>
<keyword id="KW-0520">NAD</keyword>
<keyword id="KW-0560">Oxidoreductase</keyword>
<keyword id="KW-0597">Phosphoprotein</keyword>
<keyword id="KW-1185">Reference proteome</keyword>
<keyword id="KW-0694">RNA-binding</keyword>
<keyword id="KW-0809">Transit peptide</keyword>
<keyword id="KW-0816">Tricarboxylic acid cycle</keyword>
<accession>P28241</accession>
<accession>D6W2J3</accession>
<gene>
    <name type="primary">IDH2</name>
    <name type="ordered locus">YOR136W</name>
    <name type="ORF">O3326</name>
    <name type="ORF">YOR3326W</name>
</gene>
<evidence type="ECO:0000250" key="1"/>
<evidence type="ECO:0000250" key="2">
    <source>
        <dbReference type="UniProtKB" id="P50213"/>
    </source>
</evidence>
<evidence type="ECO:0000269" key="3">
    <source>
    </source>
</evidence>
<evidence type="ECO:0000269" key="4">
    <source>
    </source>
</evidence>
<evidence type="ECO:0000269" key="5">
    <source>
    </source>
</evidence>
<evidence type="ECO:0000269" key="6">
    <source>
    </source>
</evidence>
<evidence type="ECO:0000305" key="7"/>
<evidence type="ECO:0007744" key="8">
    <source>
    </source>
</evidence>
<evidence type="ECO:0007744" key="9">
    <source>
    </source>
</evidence>
<evidence type="ECO:0007744" key="10">
    <source>
    </source>
</evidence>
<evidence type="ECO:0007829" key="11">
    <source>
        <dbReference type="PDB" id="3BLV"/>
    </source>
</evidence>
<evidence type="ECO:0007829" key="12">
    <source>
        <dbReference type="PDB" id="3BLX"/>
    </source>
</evidence>